<evidence type="ECO:0000255" key="1">
    <source>
        <dbReference type="HAMAP-Rule" id="MF_01302"/>
    </source>
</evidence>
<evidence type="ECO:0000305" key="2"/>
<sequence>MCMTDPVADMLTRIRNAGMAKHQKVDIPSSNLKVSLATVLRAEGFIKNFKVIADNKQGILRVYLKFIDEKEPVINEIKRISKPGGRVYVNSDKIKQVKNGLGVAILSTSKGLVTDKTAREMGIGGEVLCTVW</sequence>
<reference key="1">
    <citation type="submission" date="2009-07" db="EMBL/GenBank/DDBJ databases">
        <title>Complete sequence of Geobacter sp. M21.</title>
        <authorList>
            <consortium name="US DOE Joint Genome Institute"/>
            <person name="Lucas S."/>
            <person name="Copeland A."/>
            <person name="Lapidus A."/>
            <person name="Glavina del Rio T."/>
            <person name="Dalin E."/>
            <person name="Tice H."/>
            <person name="Bruce D."/>
            <person name="Goodwin L."/>
            <person name="Pitluck S."/>
            <person name="Saunders E."/>
            <person name="Brettin T."/>
            <person name="Detter J.C."/>
            <person name="Han C."/>
            <person name="Larimer F."/>
            <person name="Land M."/>
            <person name="Hauser L."/>
            <person name="Kyrpides N."/>
            <person name="Ovchinnikova G."/>
            <person name="Lovley D."/>
        </authorList>
    </citation>
    <scope>NUCLEOTIDE SEQUENCE [LARGE SCALE GENOMIC DNA]</scope>
    <source>
        <strain>M21</strain>
    </source>
</reference>
<gene>
    <name evidence="1" type="primary">rpsH</name>
    <name type="ordered locus">GM21_3314</name>
</gene>
<proteinExistence type="inferred from homology"/>
<dbReference type="EMBL" id="CP001661">
    <property type="protein sequence ID" value="ACT19339.1"/>
    <property type="molecule type" value="Genomic_DNA"/>
</dbReference>
<dbReference type="SMR" id="C6E4P3"/>
<dbReference type="STRING" id="443144.GM21_3314"/>
<dbReference type="KEGG" id="gem:GM21_3314"/>
<dbReference type="eggNOG" id="COG0096">
    <property type="taxonomic scope" value="Bacteria"/>
</dbReference>
<dbReference type="HOGENOM" id="CLU_098428_0_2_7"/>
<dbReference type="OrthoDB" id="9802617at2"/>
<dbReference type="GO" id="GO:1990904">
    <property type="term" value="C:ribonucleoprotein complex"/>
    <property type="evidence" value="ECO:0007669"/>
    <property type="project" value="UniProtKB-KW"/>
</dbReference>
<dbReference type="GO" id="GO:0005840">
    <property type="term" value="C:ribosome"/>
    <property type="evidence" value="ECO:0007669"/>
    <property type="project" value="UniProtKB-KW"/>
</dbReference>
<dbReference type="GO" id="GO:0019843">
    <property type="term" value="F:rRNA binding"/>
    <property type="evidence" value="ECO:0007669"/>
    <property type="project" value="UniProtKB-UniRule"/>
</dbReference>
<dbReference type="GO" id="GO:0003735">
    <property type="term" value="F:structural constituent of ribosome"/>
    <property type="evidence" value="ECO:0007669"/>
    <property type="project" value="InterPro"/>
</dbReference>
<dbReference type="GO" id="GO:0006412">
    <property type="term" value="P:translation"/>
    <property type="evidence" value="ECO:0007669"/>
    <property type="project" value="UniProtKB-UniRule"/>
</dbReference>
<dbReference type="FunFam" id="3.30.1370.30:FF:000002">
    <property type="entry name" value="30S ribosomal protein S8"/>
    <property type="match status" value="1"/>
</dbReference>
<dbReference type="FunFam" id="3.30.1490.10:FF:000001">
    <property type="entry name" value="30S ribosomal protein S8"/>
    <property type="match status" value="1"/>
</dbReference>
<dbReference type="Gene3D" id="3.30.1370.30">
    <property type="match status" value="1"/>
</dbReference>
<dbReference type="Gene3D" id="3.30.1490.10">
    <property type="match status" value="1"/>
</dbReference>
<dbReference type="HAMAP" id="MF_01302_B">
    <property type="entry name" value="Ribosomal_uS8_B"/>
    <property type="match status" value="1"/>
</dbReference>
<dbReference type="InterPro" id="IPR000630">
    <property type="entry name" value="Ribosomal_uS8"/>
</dbReference>
<dbReference type="InterPro" id="IPR047863">
    <property type="entry name" value="Ribosomal_uS8_CS"/>
</dbReference>
<dbReference type="InterPro" id="IPR035987">
    <property type="entry name" value="Ribosomal_uS8_sf"/>
</dbReference>
<dbReference type="NCBIfam" id="NF001109">
    <property type="entry name" value="PRK00136.1"/>
    <property type="match status" value="1"/>
</dbReference>
<dbReference type="PANTHER" id="PTHR11758">
    <property type="entry name" value="40S RIBOSOMAL PROTEIN S15A"/>
    <property type="match status" value="1"/>
</dbReference>
<dbReference type="Pfam" id="PF00410">
    <property type="entry name" value="Ribosomal_S8"/>
    <property type="match status" value="1"/>
</dbReference>
<dbReference type="SUPFAM" id="SSF56047">
    <property type="entry name" value="Ribosomal protein S8"/>
    <property type="match status" value="1"/>
</dbReference>
<dbReference type="PROSITE" id="PS00053">
    <property type="entry name" value="RIBOSOMAL_S8"/>
    <property type="match status" value="1"/>
</dbReference>
<protein>
    <recommendedName>
        <fullName evidence="1">Small ribosomal subunit protein uS8</fullName>
    </recommendedName>
    <alternativeName>
        <fullName evidence="2">30S ribosomal protein S8</fullName>
    </alternativeName>
</protein>
<organism>
    <name type="scientific">Geobacter sp. (strain M21)</name>
    <dbReference type="NCBI Taxonomy" id="443144"/>
    <lineage>
        <taxon>Bacteria</taxon>
        <taxon>Pseudomonadati</taxon>
        <taxon>Thermodesulfobacteriota</taxon>
        <taxon>Desulfuromonadia</taxon>
        <taxon>Geobacterales</taxon>
        <taxon>Geobacteraceae</taxon>
        <taxon>Geobacter</taxon>
    </lineage>
</organism>
<feature type="chain" id="PRO_1000214252" description="Small ribosomal subunit protein uS8">
    <location>
        <begin position="1"/>
        <end position="132"/>
    </location>
</feature>
<keyword id="KW-0687">Ribonucleoprotein</keyword>
<keyword id="KW-0689">Ribosomal protein</keyword>
<keyword id="KW-0694">RNA-binding</keyword>
<keyword id="KW-0699">rRNA-binding</keyword>
<comment type="function">
    <text evidence="1">One of the primary rRNA binding proteins, it binds directly to 16S rRNA central domain where it helps coordinate assembly of the platform of the 30S subunit.</text>
</comment>
<comment type="subunit">
    <text evidence="1">Part of the 30S ribosomal subunit. Contacts proteins S5 and S12.</text>
</comment>
<comment type="similarity">
    <text evidence="1">Belongs to the universal ribosomal protein uS8 family.</text>
</comment>
<name>RS8_GEOSM</name>
<accession>C6E4P3</accession>